<sequence length="185" mass="21434">MKLKKDKRREAIRQQIDSNPFITDHELSDLFQVSIQTIRLDRTYLNIPELRKRIKLVAEKNYDQISSIEEQEFIGDLIQVNPNVKAQSILDITSDSVFHKTGIARGHVLFAQANSLCVALIKQPTVLTHESSIQFIEKVKLNDTVRAEARVVNQTAKHYYVEVKSYVKHTLVFKGNFKMFYDKRG</sequence>
<reference key="1">
    <citation type="journal article" date="2008" name="Antimicrob. Agents Chemother.">
        <title>Mutated response regulator graR is responsible for phenotypic conversion of Staphylococcus aureus from heterogeneous vancomycin-intermediate resistance to vancomycin-intermediate resistance.</title>
        <authorList>
            <person name="Neoh H.-M."/>
            <person name="Cui L."/>
            <person name="Yuzawa H."/>
            <person name="Takeuchi F."/>
            <person name="Matsuo M."/>
            <person name="Hiramatsu K."/>
        </authorList>
    </citation>
    <scope>NUCLEOTIDE SEQUENCE [LARGE SCALE GENOMIC DNA]</scope>
    <source>
        <strain>Mu3 / ATCC 700698</strain>
    </source>
</reference>
<accession>A7X1J2</accession>
<evidence type="ECO:0000255" key="1">
    <source>
        <dbReference type="HAMAP-Rule" id="MF_01814"/>
    </source>
</evidence>
<dbReference type="EMBL" id="AP009324">
    <property type="protein sequence ID" value="BAF78101.1"/>
    <property type="molecule type" value="Genomic_DNA"/>
</dbReference>
<dbReference type="SMR" id="A7X1J2"/>
<dbReference type="KEGG" id="saw:SAHV_1218"/>
<dbReference type="HOGENOM" id="CLU_095708_0_0_9"/>
<dbReference type="GO" id="GO:0003677">
    <property type="term" value="F:DNA binding"/>
    <property type="evidence" value="ECO:0007669"/>
    <property type="project" value="UniProtKB-KW"/>
</dbReference>
<dbReference type="GO" id="GO:0003700">
    <property type="term" value="F:DNA-binding transcription factor activity"/>
    <property type="evidence" value="ECO:0007669"/>
    <property type="project" value="UniProtKB-UniRule"/>
</dbReference>
<dbReference type="GO" id="GO:0006633">
    <property type="term" value="P:fatty acid biosynthetic process"/>
    <property type="evidence" value="ECO:0007669"/>
    <property type="project" value="UniProtKB-KW"/>
</dbReference>
<dbReference type="GO" id="GO:0045892">
    <property type="term" value="P:negative regulation of DNA-templated transcription"/>
    <property type="evidence" value="ECO:0007669"/>
    <property type="project" value="UniProtKB-UniRule"/>
</dbReference>
<dbReference type="GO" id="GO:0045717">
    <property type="term" value="P:negative regulation of fatty acid biosynthetic process"/>
    <property type="evidence" value="ECO:0007669"/>
    <property type="project" value="UniProtKB-UniRule"/>
</dbReference>
<dbReference type="CDD" id="cd03440">
    <property type="entry name" value="hot_dog"/>
    <property type="match status" value="1"/>
</dbReference>
<dbReference type="Gene3D" id="3.10.129.10">
    <property type="entry name" value="Hotdog Thioesterase"/>
    <property type="match status" value="1"/>
</dbReference>
<dbReference type="Gene3D" id="1.10.10.10">
    <property type="entry name" value="Winged helix-like DNA-binding domain superfamily/Winged helix DNA-binding domain"/>
    <property type="match status" value="1"/>
</dbReference>
<dbReference type="HAMAP" id="MF_01814">
    <property type="entry name" value="Transcrip_fact_FapR"/>
    <property type="match status" value="1"/>
</dbReference>
<dbReference type="InterPro" id="IPR029069">
    <property type="entry name" value="HotDog_dom_sf"/>
</dbReference>
<dbReference type="InterPro" id="IPR006683">
    <property type="entry name" value="Thioestr_dom"/>
</dbReference>
<dbReference type="InterPro" id="IPR017275">
    <property type="entry name" value="Transcription_factor_FapR"/>
</dbReference>
<dbReference type="InterPro" id="IPR036388">
    <property type="entry name" value="WH-like_DNA-bd_sf"/>
</dbReference>
<dbReference type="NCBIfam" id="NF003359">
    <property type="entry name" value="PRK04424.1"/>
    <property type="match status" value="1"/>
</dbReference>
<dbReference type="Pfam" id="PF03061">
    <property type="entry name" value="4HBT"/>
    <property type="match status" value="1"/>
</dbReference>
<dbReference type="PIRSF" id="PIRSF037733">
    <property type="entry name" value="Transcription_factor_FapR"/>
    <property type="match status" value="1"/>
</dbReference>
<dbReference type="SUPFAM" id="SSF54637">
    <property type="entry name" value="Thioesterase/thiol ester dehydrase-isomerase"/>
    <property type="match status" value="1"/>
</dbReference>
<feature type="chain" id="PRO_1000070208" description="Transcription factor FapR">
    <location>
        <begin position="1"/>
        <end position="185"/>
    </location>
</feature>
<protein>
    <recommendedName>
        <fullName evidence="1">Transcription factor FapR</fullName>
    </recommendedName>
    <alternativeName>
        <fullName evidence="1">Fatty acid and phospholipid biosynthesis regulator</fullName>
    </alternativeName>
</protein>
<name>FAPR_STAA1</name>
<gene>
    <name evidence="1" type="primary">fapR</name>
    <name type="ordered locus">SAHV_1218</name>
</gene>
<comment type="function">
    <text evidence="1">Transcriptional factor involved in regulation of membrane lipid biosynthesis by repressing genes involved in fatty acid and phospholipid metabolism.</text>
</comment>
<comment type="similarity">
    <text evidence="1">Belongs to the FapR family.</text>
</comment>
<proteinExistence type="inferred from homology"/>
<organism>
    <name type="scientific">Staphylococcus aureus (strain Mu3 / ATCC 700698)</name>
    <dbReference type="NCBI Taxonomy" id="418127"/>
    <lineage>
        <taxon>Bacteria</taxon>
        <taxon>Bacillati</taxon>
        <taxon>Bacillota</taxon>
        <taxon>Bacilli</taxon>
        <taxon>Bacillales</taxon>
        <taxon>Staphylococcaceae</taxon>
        <taxon>Staphylococcus</taxon>
    </lineage>
</organism>
<keyword id="KW-0238">DNA-binding</keyword>
<keyword id="KW-0275">Fatty acid biosynthesis</keyword>
<keyword id="KW-0276">Fatty acid metabolism</keyword>
<keyword id="KW-0444">Lipid biosynthesis</keyword>
<keyword id="KW-0443">Lipid metabolism</keyword>
<keyword id="KW-0678">Repressor</keyword>
<keyword id="KW-0804">Transcription</keyword>
<keyword id="KW-0805">Transcription regulation</keyword>